<proteinExistence type="inferred from homology"/>
<keyword id="KW-0249">Electron transport</keyword>
<keyword id="KW-0274">FAD</keyword>
<keyword id="KW-0285">Flavoprotein</keyword>
<keyword id="KW-1185">Reference proteome</keyword>
<keyword id="KW-0813">Transport</keyword>
<dbReference type="EMBL" id="AE005174">
    <property type="protein sequence ID" value="AAG54345.1"/>
    <property type="molecule type" value="Genomic_DNA"/>
</dbReference>
<dbReference type="EMBL" id="BA000007">
    <property type="protein sequence ID" value="BAB33468.1"/>
    <property type="molecule type" value="Genomic_DNA"/>
</dbReference>
<dbReference type="PIR" id="E85485">
    <property type="entry name" value="E85485"/>
</dbReference>
<dbReference type="PIR" id="E90634">
    <property type="entry name" value="E90634"/>
</dbReference>
<dbReference type="RefSeq" id="NP_308072.1">
    <property type="nucleotide sequence ID" value="NC_002695.1"/>
</dbReference>
<dbReference type="RefSeq" id="WP_001091483.1">
    <property type="nucleotide sequence ID" value="NZ_VOAI01000002.1"/>
</dbReference>
<dbReference type="SMR" id="Q8XA27"/>
<dbReference type="STRING" id="155864.Z0048"/>
<dbReference type="GeneID" id="913442"/>
<dbReference type="KEGG" id="ece:Z0048"/>
<dbReference type="KEGG" id="ecs:ECs_0045"/>
<dbReference type="PATRIC" id="fig|386585.9.peg.144"/>
<dbReference type="eggNOG" id="COG2025">
    <property type="taxonomic scope" value="Bacteria"/>
</dbReference>
<dbReference type="HOGENOM" id="CLU_034178_0_1_6"/>
<dbReference type="OMA" id="RYVFGNK"/>
<dbReference type="UniPathway" id="UPA00117"/>
<dbReference type="Proteomes" id="UP000000558">
    <property type="component" value="Chromosome"/>
</dbReference>
<dbReference type="Proteomes" id="UP000002519">
    <property type="component" value="Chromosome"/>
</dbReference>
<dbReference type="GO" id="GO:0009055">
    <property type="term" value="F:electron transfer activity"/>
    <property type="evidence" value="ECO:0007669"/>
    <property type="project" value="InterPro"/>
</dbReference>
<dbReference type="GO" id="GO:0050660">
    <property type="term" value="F:flavin adenine dinucleotide binding"/>
    <property type="evidence" value="ECO:0007669"/>
    <property type="project" value="InterPro"/>
</dbReference>
<dbReference type="GO" id="GO:0009437">
    <property type="term" value="P:carnitine metabolic process"/>
    <property type="evidence" value="ECO:0007669"/>
    <property type="project" value="UniProtKB-UniRule"/>
</dbReference>
<dbReference type="GO" id="GO:0033539">
    <property type="term" value="P:fatty acid beta-oxidation using acyl-CoA dehydrogenase"/>
    <property type="evidence" value="ECO:0007669"/>
    <property type="project" value="TreeGrafter"/>
</dbReference>
<dbReference type="FunFam" id="3.40.50.1220:FF:000004">
    <property type="entry name" value="Electron transfer flavoprotein"/>
    <property type="match status" value="1"/>
</dbReference>
<dbReference type="FunFam" id="3.40.50.620:FF:000067">
    <property type="entry name" value="Protein FixB"/>
    <property type="match status" value="1"/>
</dbReference>
<dbReference type="Gene3D" id="3.40.50.620">
    <property type="entry name" value="HUPs"/>
    <property type="match status" value="1"/>
</dbReference>
<dbReference type="Gene3D" id="3.40.50.1220">
    <property type="entry name" value="TPP-binding domain"/>
    <property type="match status" value="1"/>
</dbReference>
<dbReference type="HAMAP" id="MF_01056">
    <property type="entry name" value="FixB"/>
    <property type="match status" value="1"/>
</dbReference>
<dbReference type="InterPro" id="IPR029035">
    <property type="entry name" value="DHS-like_NAD/FAD-binding_dom"/>
</dbReference>
<dbReference type="InterPro" id="IPR014730">
    <property type="entry name" value="ETF_a/b_N"/>
</dbReference>
<dbReference type="InterPro" id="IPR001308">
    <property type="entry name" value="ETF_a/FixB"/>
</dbReference>
<dbReference type="InterPro" id="IPR014731">
    <property type="entry name" value="ETF_asu_C"/>
</dbReference>
<dbReference type="InterPro" id="IPR018206">
    <property type="entry name" value="ETF_asu_C_CS"/>
</dbReference>
<dbReference type="InterPro" id="IPR023461">
    <property type="entry name" value="FixB"/>
</dbReference>
<dbReference type="InterPro" id="IPR014729">
    <property type="entry name" value="Rossmann-like_a/b/a_fold"/>
</dbReference>
<dbReference type="NCBIfam" id="NF002889">
    <property type="entry name" value="PRK03363.1"/>
    <property type="match status" value="1"/>
</dbReference>
<dbReference type="PANTHER" id="PTHR43153">
    <property type="entry name" value="ELECTRON TRANSFER FLAVOPROTEIN ALPHA"/>
    <property type="match status" value="1"/>
</dbReference>
<dbReference type="PANTHER" id="PTHR43153:SF5">
    <property type="entry name" value="PROTEIN FIXB-RELATED"/>
    <property type="match status" value="1"/>
</dbReference>
<dbReference type="Pfam" id="PF01012">
    <property type="entry name" value="ETF"/>
    <property type="match status" value="1"/>
</dbReference>
<dbReference type="Pfam" id="PF00766">
    <property type="entry name" value="ETF_alpha"/>
    <property type="match status" value="1"/>
</dbReference>
<dbReference type="PIRSF" id="PIRSF000089">
    <property type="entry name" value="Electra_flavoP_a"/>
    <property type="match status" value="1"/>
</dbReference>
<dbReference type="SMART" id="SM00893">
    <property type="entry name" value="ETF"/>
    <property type="match status" value="1"/>
</dbReference>
<dbReference type="SUPFAM" id="SSF52402">
    <property type="entry name" value="Adenine nucleotide alpha hydrolases-like"/>
    <property type="match status" value="1"/>
</dbReference>
<dbReference type="SUPFAM" id="SSF52467">
    <property type="entry name" value="DHS-like NAD/FAD-binding domain"/>
    <property type="match status" value="1"/>
</dbReference>
<dbReference type="PROSITE" id="PS00696">
    <property type="entry name" value="ETF_ALPHA"/>
    <property type="match status" value="1"/>
</dbReference>
<gene>
    <name evidence="1" type="primary">fixB</name>
    <name type="ordered locus">Z0048</name>
    <name type="ordered locus">ECs0045</name>
</gene>
<name>FIXB_ECO57</name>
<organism>
    <name type="scientific">Escherichia coli O157:H7</name>
    <dbReference type="NCBI Taxonomy" id="83334"/>
    <lineage>
        <taxon>Bacteria</taxon>
        <taxon>Pseudomonadati</taxon>
        <taxon>Pseudomonadota</taxon>
        <taxon>Gammaproteobacteria</taxon>
        <taxon>Enterobacterales</taxon>
        <taxon>Enterobacteriaceae</taxon>
        <taxon>Escherichia</taxon>
    </lineage>
</organism>
<sequence length="313" mass="33513">MNTFSQVWVFSDTPSRLPELMNGAQALANQINAFVLNDADGAQAIQLGANHVWKLNGKPDDRMIEDYASVMADTIRQHGADGLVLLPNTRRGKLLAAKLGYRLKAAVSNDASTVSVQDGKATVKHMVYGGLAIGEERIATPYAVLTISSGTFDAAQPDASRTGETHTVEWQAPAVAITRTATQARQSNSVDLDKARLVVSVGRGIGSKENIALAEQLCKAIGAELACSRPVAENEKWMEHERYVGISNLMLKPELYLAVGISGQIQHMVGANASQTIFAINKDKNAPIFQYADYGIVGDAVKILPALTAALAR</sequence>
<evidence type="ECO:0000255" key="1">
    <source>
        <dbReference type="HAMAP-Rule" id="MF_01056"/>
    </source>
</evidence>
<protein>
    <recommendedName>
        <fullName evidence="1">Protein FixB</fullName>
    </recommendedName>
</protein>
<accession>Q8XA27</accession>
<feature type="chain" id="PRO_0000167863" description="Protein FixB">
    <location>
        <begin position="1"/>
        <end position="313"/>
    </location>
</feature>
<feature type="binding site" evidence="1">
    <location>
        <begin position="255"/>
        <end position="283"/>
    </location>
    <ligand>
        <name>FAD</name>
        <dbReference type="ChEBI" id="CHEBI:57692"/>
    </ligand>
</feature>
<reference key="1">
    <citation type="journal article" date="2001" name="Nature">
        <title>Genome sequence of enterohaemorrhagic Escherichia coli O157:H7.</title>
        <authorList>
            <person name="Perna N.T."/>
            <person name="Plunkett G. III"/>
            <person name="Burland V."/>
            <person name="Mau B."/>
            <person name="Glasner J.D."/>
            <person name="Rose D.J."/>
            <person name="Mayhew G.F."/>
            <person name="Evans P.S."/>
            <person name="Gregor J."/>
            <person name="Kirkpatrick H.A."/>
            <person name="Posfai G."/>
            <person name="Hackett J."/>
            <person name="Klink S."/>
            <person name="Boutin A."/>
            <person name="Shao Y."/>
            <person name="Miller L."/>
            <person name="Grotbeck E.J."/>
            <person name="Davis N.W."/>
            <person name="Lim A."/>
            <person name="Dimalanta E.T."/>
            <person name="Potamousis K."/>
            <person name="Apodaca J."/>
            <person name="Anantharaman T.S."/>
            <person name="Lin J."/>
            <person name="Yen G."/>
            <person name="Schwartz D.C."/>
            <person name="Welch R.A."/>
            <person name="Blattner F.R."/>
        </authorList>
    </citation>
    <scope>NUCLEOTIDE SEQUENCE [LARGE SCALE GENOMIC DNA]</scope>
    <source>
        <strain>O157:H7 / EDL933 / ATCC 700927 / EHEC</strain>
    </source>
</reference>
<reference key="2">
    <citation type="journal article" date="2001" name="DNA Res.">
        <title>Complete genome sequence of enterohemorrhagic Escherichia coli O157:H7 and genomic comparison with a laboratory strain K-12.</title>
        <authorList>
            <person name="Hayashi T."/>
            <person name="Makino K."/>
            <person name="Ohnishi M."/>
            <person name="Kurokawa K."/>
            <person name="Ishii K."/>
            <person name="Yokoyama K."/>
            <person name="Han C.-G."/>
            <person name="Ohtsubo E."/>
            <person name="Nakayama K."/>
            <person name="Murata T."/>
            <person name="Tanaka M."/>
            <person name="Tobe T."/>
            <person name="Iida T."/>
            <person name="Takami H."/>
            <person name="Honda T."/>
            <person name="Sasakawa C."/>
            <person name="Ogasawara N."/>
            <person name="Yasunaga T."/>
            <person name="Kuhara S."/>
            <person name="Shiba T."/>
            <person name="Hattori M."/>
            <person name="Shinagawa H."/>
        </authorList>
    </citation>
    <scope>NUCLEOTIDE SEQUENCE [LARGE SCALE GENOMIC DNA]</scope>
    <source>
        <strain>O157:H7 / Sakai / RIMD 0509952 / EHEC</strain>
    </source>
</reference>
<comment type="function">
    <text evidence="1">Required for anaerobic carnitine reduction. May bring reductant to CaiA.</text>
</comment>
<comment type="pathway">
    <text evidence="1">Amine and polyamine metabolism; carnitine metabolism.</text>
</comment>
<comment type="subunit">
    <text evidence="1">Heterodimer of FixA and FixB.</text>
</comment>
<comment type="similarity">
    <text evidence="1">Belongs to the ETF alpha-subunit/FixB family.</text>
</comment>